<proteinExistence type="evidence at protein level"/>
<organism>
    <name type="scientific">Homo sapiens</name>
    <name type="common">Human</name>
    <dbReference type="NCBI Taxonomy" id="9606"/>
    <lineage>
        <taxon>Eukaryota</taxon>
        <taxon>Metazoa</taxon>
        <taxon>Chordata</taxon>
        <taxon>Craniata</taxon>
        <taxon>Vertebrata</taxon>
        <taxon>Euteleostomi</taxon>
        <taxon>Mammalia</taxon>
        <taxon>Eutheria</taxon>
        <taxon>Euarchontoglires</taxon>
        <taxon>Primates</taxon>
        <taxon>Haplorrhini</taxon>
        <taxon>Catarrhini</taxon>
        <taxon>Hominidae</taxon>
        <taxon>Homo</taxon>
    </lineage>
</organism>
<evidence type="ECO:0000250" key="1">
    <source>
        <dbReference type="UniProtKB" id="P14755"/>
    </source>
</evidence>
<evidence type="ECO:0000250" key="2">
    <source>
        <dbReference type="UniProtKB" id="Q811X6"/>
    </source>
</evidence>
<evidence type="ECO:0000269" key="3">
    <source>
    </source>
</evidence>
<evidence type="ECO:0000269" key="4">
    <source>
    </source>
</evidence>
<evidence type="ECO:0000269" key="5">
    <source ref="11"/>
</evidence>
<evidence type="ECO:0000303" key="6">
    <source>
    </source>
</evidence>
<evidence type="ECO:0000303" key="7">
    <source ref="3"/>
</evidence>
<evidence type="ECO:0000305" key="8"/>
<evidence type="ECO:0000305" key="9">
    <source>
    </source>
</evidence>
<evidence type="ECO:0007744" key="10">
    <source>
    </source>
</evidence>
<evidence type="ECO:0007829" key="11">
    <source>
        <dbReference type="PDB" id="3F3S"/>
    </source>
</evidence>
<comment type="function">
    <text evidence="4">Has high L-gulonate 3-dehydrogenase activity. It also exhibits low dehydrogenase activity toward L-3-hydroxybutyrate (HBA) and L-threonate.</text>
</comment>
<comment type="catalytic activity">
    <reaction evidence="4">
        <text>L-gulonate + NAD(+) = 3-dehydro-L-gulonate + NADH + H(+)</text>
        <dbReference type="Rhea" id="RHEA:12889"/>
        <dbReference type="ChEBI" id="CHEBI:13115"/>
        <dbReference type="ChEBI" id="CHEBI:15378"/>
        <dbReference type="ChEBI" id="CHEBI:57540"/>
        <dbReference type="ChEBI" id="CHEBI:57655"/>
        <dbReference type="ChEBI" id="CHEBI:57945"/>
        <dbReference type="EC" id="1.1.1.45"/>
    </reaction>
    <physiologicalReaction direction="left-to-right" evidence="9">
        <dbReference type="Rhea" id="RHEA:12890"/>
    </physiologicalReaction>
</comment>
<comment type="activity regulation">
    <text evidence="4">Inhibited by malonate.</text>
</comment>
<comment type="biophysicochemical properties">
    <kinetics>
        <KM evidence="4">0.01 mM for NAD</KM>
        <KM evidence="4">8.0E-4 mM for NADH</KM>
    </kinetics>
</comment>
<comment type="subunit">
    <text evidence="4 5">Homodimer.</text>
</comment>
<comment type="subcellular location">
    <subcellularLocation>
        <location evidence="1">Cytoplasm</location>
    </subcellularLocation>
</comment>
<comment type="alternative products">
    <event type="alternative splicing"/>
    <isoform>
        <id>Q9Y2S2-1</id>
        <name>1</name>
        <sequence type="displayed"/>
    </isoform>
    <isoform>
        <id>Q9Y2S2-2</id>
        <name>2</name>
        <sequence type="described" ref="VSP_034641"/>
    </isoform>
</comment>
<comment type="tissue specificity">
    <text evidence="3">Widely expressed, with highest levels in liver and kidney.</text>
</comment>
<comment type="similarity">
    <text evidence="8">Belongs to the 3-hydroxyacyl-CoA dehydrogenase family.</text>
</comment>
<comment type="sequence caution" evidence="8">
    <conflict type="frameshift">
        <sequence resource="EMBL-CDS" id="AAD27782"/>
    </conflict>
</comment>
<comment type="sequence caution" evidence="8">
    <conflict type="miscellaneous discrepancy">
        <sequence resource="EMBL-CDS" id="AAD27782"/>
    </conflict>
    <text>Unknown reasons.</text>
</comment>
<accession>Q9Y2S2</accession>
<accession>A0PJ43</accession>
<accession>B3KN92</accession>
<accession>Q0VDI1</accession>
<accession>Q7Z4Z9</accession>
<accession>Q9P0G7</accession>
<gene>
    <name type="primary">CRYL1</name>
    <name type="synonym">CRY</name>
</gene>
<keyword id="KW-0002">3D-structure</keyword>
<keyword id="KW-0007">Acetylation</keyword>
<keyword id="KW-0025">Alternative splicing</keyword>
<keyword id="KW-0963">Cytoplasm</keyword>
<keyword id="KW-0520">NAD</keyword>
<keyword id="KW-0560">Oxidoreductase</keyword>
<keyword id="KW-0597">Phosphoprotein</keyword>
<keyword id="KW-1267">Proteomics identification</keyword>
<keyword id="KW-1185">Reference proteome</keyword>
<feature type="initiator methionine" description="Removed" evidence="1">
    <location>
        <position position="1"/>
    </location>
</feature>
<feature type="chain" id="PRO_0000109320" description="Lambda-crystallin homolog">
    <location>
        <begin position="2"/>
        <end position="319"/>
    </location>
</feature>
<feature type="binding site" evidence="5">
    <location>
        <begin position="16"/>
        <end position="17"/>
    </location>
    <ligand>
        <name>NAD(+)</name>
        <dbReference type="ChEBI" id="CHEBI:57540"/>
    </ligand>
</feature>
<feature type="binding site" evidence="5">
    <location>
        <position position="36"/>
    </location>
    <ligand>
        <name>NAD(+)</name>
        <dbReference type="ChEBI" id="CHEBI:57540"/>
    </ligand>
</feature>
<feature type="binding site" evidence="5">
    <location>
        <position position="97"/>
    </location>
    <ligand>
        <name>NAD(+)</name>
        <dbReference type="ChEBI" id="CHEBI:57540"/>
    </ligand>
</feature>
<feature type="binding site" evidence="5">
    <location>
        <position position="102"/>
    </location>
    <ligand>
        <name>NAD(+)</name>
        <dbReference type="ChEBI" id="CHEBI:57540"/>
    </ligand>
</feature>
<feature type="modified residue" description="N-acetylalanine" evidence="1">
    <location>
        <position position="2"/>
    </location>
</feature>
<feature type="modified residue" description="Phosphoserine" evidence="2">
    <location>
        <position position="3"/>
    </location>
</feature>
<feature type="modified residue" description="Phosphoserine" evidence="10">
    <location>
        <position position="111"/>
    </location>
</feature>
<feature type="splice variant" id="VSP_034641" description="In isoform 2." evidence="6 7">
    <location>
        <begin position="1"/>
        <end position="22"/>
    </location>
</feature>
<feature type="strand" evidence="11">
    <location>
        <begin position="9"/>
        <end position="13"/>
    </location>
</feature>
<feature type="helix" evidence="11">
    <location>
        <begin position="16"/>
        <end position="27"/>
    </location>
</feature>
<feature type="strand" evidence="11">
    <location>
        <begin position="32"/>
        <end position="35"/>
    </location>
</feature>
<feature type="helix" evidence="11">
    <location>
        <begin position="39"/>
        <end position="58"/>
    </location>
</feature>
<feature type="strand" evidence="11">
    <location>
        <begin position="64"/>
        <end position="66"/>
    </location>
</feature>
<feature type="helix" evidence="11">
    <location>
        <begin position="68"/>
        <end position="73"/>
    </location>
</feature>
<feature type="strand" evidence="11">
    <location>
        <begin position="75"/>
        <end position="77"/>
    </location>
</feature>
<feature type="helix" evidence="11">
    <location>
        <begin position="81"/>
        <end position="85"/>
    </location>
</feature>
<feature type="strand" evidence="11">
    <location>
        <begin position="89"/>
        <end position="93"/>
    </location>
</feature>
<feature type="helix" evidence="11">
    <location>
        <begin position="99"/>
        <end position="110"/>
    </location>
</feature>
<feature type="strand" evidence="11">
    <location>
        <begin position="118"/>
        <end position="121"/>
    </location>
</feature>
<feature type="helix" evidence="11">
    <location>
        <begin position="128"/>
        <end position="131"/>
    </location>
</feature>
<feature type="turn" evidence="11">
    <location>
        <begin position="132"/>
        <end position="134"/>
    </location>
</feature>
<feature type="helix" evidence="11">
    <location>
        <begin position="138"/>
        <end position="140"/>
    </location>
</feature>
<feature type="strand" evidence="11">
    <location>
        <begin position="141"/>
        <end position="146"/>
    </location>
</feature>
<feature type="turn" evidence="11">
    <location>
        <begin position="150"/>
        <end position="152"/>
    </location>
</feature>
<feature type="strand" evidence="11">
    <location>
        <begin position="155"/>
        <end position="160"/>
    </location>
</feature>
<feature type="helix" evidence="11">
    <location>
        <begin position="166"/>
        <end position="178"/>
    </location>
</feature>
<feature type="strand" evidence="11">
    <location>
        <begin position="182"/>
        <end position="185"/>
    </location>
</feature>
<feature type="turn" evidence="11">
    <location>
        <begin position="191"/>
        <end position="194"/>
    </location>
</feature>
<feature type="helix" evidence="11">
    <location>
        <begin position="195"/>
        <end position="211"/>
    </location>
</feature>
<feature type="helix" evidence="11">
    <location>
        <begin position="217"/>
        <end position="225"/>
    </location>
</feature>
<feature type="helix" evidence="11">
    <location>
        <begin position="228"/>
        <end position="232"/>
    </location>
</feature>
<feature type="helix" evidence="11">
    <location>
        <begin position="237"/>
        <end position="244"/>
    </location>
</feature>
<feature type="helix" evidence="11">
    <location>
        <begin position="248"/>
        <end position="263"/>
    </location>
</feature>
<feature type="helix" evidence="11">
    <location>
        <begin position="274"/>
        <end position="287"/>
    </location>
</feature>
<feature type="helix" evidence="11">
    <location>
        <begin position="292"/>
        <end position="315"/>
    </location>
</feature>
<reference key="1">
    <citation type="submission" date="1998-07" db="EMBL/GenBank/DDBJ databases">
        <title>Human lambda-crystallin mRNA.</title>
        <authorList>
            <person name="Hu R."/>
            <person name="Song H."/>
            <person name="Peng Y."/>
            <person name="Fu G."/>
            <person name="Mao M."/>
            <person name="Zhang Q."/>
            <person name="Zhu H."/>
            <person name="Li G."/>
            <person name="Luo M."/>
            <person name="Hu R."/>
            <person name="Chen J."/>
        </authorList>
    </citation>
    <scope>NUCLEOTIDE SEQUENCE [MRNA] (ISOFORM 1)</scope>
    <source>
        <tissue>Pituitary</tissue>
    </source>
</reference>
<reference key="2">
    <citation type="journal article" date="2003" name="Gene">
        <title>Human CRYL1, a novel enzyme-crystallin overexpressed in liver and kidney and downregulated in 58% of liver cancer tissues from 60 Chinese patients, and four new homologs from other mammalians.</title>
        <authorList>
            <person name="Chen J."/>
            <person name="Yu L."/>
            <person name="Li D."/>
            <person name="Gao Q."/>
            <person name="Wang J."/>
            <person name="Huang X."/>
            <person name="Bi G."/>
            <person name="Wu H."/>
            <person name="Zhao S."/>
        </authorList>
    </citation>
    <scope>NUCLEOTIDE SEQUENCE [MRNA] (ISOFORM 1)</scope>
    <scope>TISSUE SPECIFICITY</scope>
    <source>
        <tissue>Liver</tissue>
    </source>
</reference>
<reference key="3">
    <citation type="submission" date="2000-05" db="EMBL/GenBank/DDBJ databases">
        <title>A novel gene expressed in human hypothalamus.</title>
        <authorList>
            <person name="Li Y."/>
            <person name="Shi J."/>
            <person name="Huang C."/>
            <person name="Jiang C."/>
            <person name="Ren S."/>
            <person name="Zhou J."/>
            <person name="Yu Y."/>
            <person name="Xu S."/>
            <person name="Wang Y."/>
            <person name="Fu G."/>
            <person name="Chen Z."/>
            <person name="Han Z."/>
        </authorList>
    </citation>
    <scope>NUCLEOTIDE SEQUENCE [LARGE SCALE MRNA] (ISOFORM 2)</scope>
    <source>
        <tissue>Hypothalamus</tissue>
    </source>
</reference>
<reference key="4">
    <citation type="journal article" date="2004" name="Nat. Genet.">
        <title>Complete sequencing and characterization of 21,243 full-length human cDNAs.</title>
        <authorList>
            <person name="Ota T."/>
            <person name="Suzuki Y."/>
            <person name="Nishikawa T."/>
            <person name="Otsuki T."/>
            <person name="Sugiyama T."/>
            <person name="Irie R."/>
            <person name="Wakamatsu A."/>
            <person name="Hayashi K."/>
            <person name="Sato H."/>
            <person name="Nagai K."/>
            <person name="Kimura K."/>
            <person name="Makita H."/>
            <person name="Sekine M."/>
            <person name="Obayashi M."/>
            <person name="Nishi T."/>
            <person name="Shibahara T."/>
            <person name="Tanaka T."/>
            <person name="Ishii S."/>
            <person name="Yamamoto J."/>
            <person name="Saito K."/>
            <person name="Kawai Y."/>
            <person name="Isono Y."/>
            <person name="Nakamura Y."/>
            <person name="Nagahari K."/>
            <person name="Murakami K."/>
            <person name="Yasuda T."/>
            <person name="Iwayanagi T."/>
            <person name="Wagatsuma M."/>
            <person name="Shiratori A."/>
            <person name="Sudo H."/>
            <person name="Hosoiri T."/>
            <person name="Kaku Y."/>
            <person name="Kodaira H."/>
            <person name="Kondo H."/>
            <person name="Sugawara M."/>
            <person name="Takahashi M."/>
            <person name="Kanda K."/>
            <person name="Yokoi T."/>
            <person name="Furuya T."/>
            <person name="Kikkawa E."/>
            <person name="Omura Y."/>
            <person name="Abe K."/>
            <person name="Kamihara K."/>
            <person name="Katsuta N."/>
            <person name="Sato K."/>
            <person name="Tanikawa M."/>
            <person name="Yamazaki M."/>
            <person name="Ninomiya K."/>
            <person name="Ishibashi T."/>
            <person name="Yamashita H."/>
            <person name="Murakawa K."/>
            <person name="Fujimori K."/>
            <person name="Tanai H."/>
            <person name="Kimata M."/>
            <person name="Watanabe M."/>
            <person name="Hiraoka S."/>
            <person name="Chiba Y."/>
            <person name="Ishida S."/>
            <person name="Ono Y."/>
            <person name="Takiguchi S."/>
            <person name="Watanabe S."/>
            <person name="Yosida M."/>
            <person name="Hotuta T."/>
            <person name="Kusano J."/>
            <person name="Kanehori K."/>
            <person name="Takahashi-Fujii A."/>
            <person name="Hara H."/>
            <person name="Tanase T.-O."/>
            <person name="Nomura Y."/>
            <person name="Togiya S."/>
            <person name="Komai F."/>
            <person name="Hara R."/>
            <person name="Takeuchi K."/>
            <person name="Arita M."/>
            <person name="Imose N."/>
            <person name="Musashino K."/>
            <person name="Yuuki H."/>
            <person name="Oshima A."/>
            <person name="Sasaki N."/>
            <person name="Aotsuka S."/>
            <person name="Yoshikawa Y."/>
            <person name="Matsunawa H."/>
            <person name="Ichihara T."/>
            <person name="Shiohata N."/>
            <person name="Sano S."/>
            <person name="Moriya S."/>
            <person name="Momiyama H."/>
            <person name="Satoh N."/>
            <person name="Takami S."/>
            <person name="Terashima Y."/>
            <person name="Suzuki O."/>
            <person name="Nakagawa S."/>
            <person name="Senoh A."/>
            <person name="Mizoguchi H."/>
            <person name="Goto Y."/>
            <person name="Shimizu F."/>
            <person name="Wakebe H."/>
            <person name="Hishigaki H."/>
            <person name="Watanabe T."/>
            <person name="Sugiyama A."/>
            <person name="Takemoto M."/>
            <person name="Kawakami B."/>
            <person name="Yamazaki M."/>
            <person name="Watanabe K."/>
            <person name="Kumagai A."/>
            <person name="Itakura S."/>
            <person name="Fukuzumi Y."/>
            <person name="Fujimori Y."/>
            <person name="Komiyama M."/>
            <person name="Tashiro H."/>
            <person name="Tanigami A."/>
            <person name="Fujiwara T."/>
            <person name="Ono T."/>
            <person name="Yamada K."/>
            <person name="Fujii Y."/>
            <person name="Ozaki K."/>
            <person name="Hirao M."/>
            <person name="Ohmori Y."/>
            <person name="Kawabata A."/>
            <person name="Hikiji T."/>
            <person name="Kobatake N."/>
            <person name="Inagaki H."/>
            <person name="Ikema Y."/>
            <person name="Okamoto S."/>
            <person name="Okitani R."/>
            <person name="Kawakami T."/>
            <person name="Noguchi S."/>
            <person name="Itoh T."/>
            <person name="Shigeta K."/>
            <person name="Senba T."/>
            <person name="Matsumura K."/>
            <person name="Nakajima Y."/>
            <person name="Mizuno T."/>
            <person name="Morinaga M."/>
            <person name="Sasaki M."/>
            <person name="Togashi T."/>
            <person name="Oyama M."/>
            <person name="Hata H."/>
            <person name="Watanabe M."/>
            <person name="Komatsu T."/>
            <person name="Mizushima-Sugano J."/>
            <person name="Satoh T."/>
            <person name="Shirai Y."/>
            <person name="Takahashi Y."/>
            <person name="Nakagawa K."/>
            <person name="Okumura K."/>
            <person name="Nagase T."/>
            <person name="Nomura N."/>
            <person name="Kikuchi H."/>
            <person name="Masuho Y."/>
            <person name="Yamashita R."/>
            <person name="Nakai K."/>
            <person name="Yada T."/>
            <person name="Nakamura Y."/>
            <person name="Ohara O."/>
            <person name="Isogai T."/>
            <person name="Sugano S."/>
        </authorList>
    </citation>
    <scope>NUCLEOTIDE SEQUENCE [LARGE SCALE MRNA] (ISOFORM 1)</scope>
</reference>
<reference key="5">
    <citation type="journal article" date="2004" name="Nature">
        <title>The DNA sequence and analysis of human chromosome 13.</title>
        <authorList>
            <person name="Dunham A."/>
            <person name="Matthews L.H."/>
            <person name="Burton J."/>
            <person name="Ashurst J.L."/>
            <person name="Howe K.L."/>
            <person name="Ashcroft K.J."/>
            <person name="Beare D.M."/>
            <person name="Burford D.C."/>
            <person name="Hunt S.E."/>
            <person name="Griffiths-Jones S."/>
            <person name="Jones M.C."/>
            <person name="Keenan S.J."/>
            <person name="Oliver K."/>
            <person name="Scott C.E."/>
            <person name="Ainscough R."/>
            <person name="Almeida J.P."/>
            <person name="Ambrose K.D."/>
            <person name="Andrews D.T."/>
            <person name="Ashwell R.I.S."/>
            <person name="Babbage A.K."/>
            <person name="Bagguley C.L."/>
            <person name="Bailey J."/>
            <person name="Bannerjee R."/>
            <person name="Barlow K.F."/>
            <person name="Bates K."/>
            <person name="Beasley H."/>
            <person name="Bird C.P."/>
            <person name="Bray-Allen S."/>
            <person name="Brown A.J."/>
            <person name="Brown J.Y."/>
            <person name="Burrill W."/>
            <person name="Carder C."/>
            <person name="Carter N.P."/>
            <person name="Chapman J.C."/>
            <person name="Clamp M.E."/>
            <person name="Clark S.Y."/>
            <person name="Clarke G."/>
            <person name="Clee C.M."/>
            <person name="Clegg S.C."/>
            <person name="Cobley V."/>
            <person name="Collins J.E."/>
            <person name="Corby N."/>
            <person name="Coville G.J."/>
            <person name="Deloukas P."/>
            <person name="Dhami P."/>
            <person name="Dunham I."/>
            <person name="Dunn M."/>
            <person name="Earthrowl M.E."/>
            <person name="Ellington A.G."/>
            <person name="Faulkner L."/>
            <person name="Frankish A.G."/>
            <person name="Frankland J."/>
            <person name="French L."/>
            <person name="Garner P."/>
            <person name="Garnett J."/>
            <person name="Gilbert J.G.R."/>
            <person name="Gilson C.J."/>
            <person name="Ghori J."/>
            <person name="Grafham D.V."/>
            <person name="Gribble S.M."/>
            <person name="Griffiths C."/>
            <person name="Hall R.E."/>
            <person name="Hammond S."/>
            <person name="Harley J.L."/>
            <person name="Hart E.A."/>
            <person name="Heath P.D."/>
            <person name="Howden P.J."/>
            <person name="Huckle E.J."/>
            <person name="Hunt P.J."/>
            <person name="Hunt A.R."/>
            <person name="Johnson C."/>
            <person name="Johnson D."/>
            <person name="Kay M."/>
            <person name="Kimberley A.M."/>
            <person name="King A."/>
            <person name="Laird G.K."/>
            <person name="Langford C.J."/>
            <person name="Lawlor S."/>
            <person name="Leongamornlert D.A."/>
            <person name="Lloyd D.M."/>
            <person name="Lloyd C."/>
            <person name="Loveland J.E."/>
            <person name="Lovell J."/>
            <person name="Martin S."/>
            <person name="Mashreghi-Mohammadi M."/>
            <person name="McLaren S.J."/>
            <person name="McMurray A."/>
            <person name="Milne S."/>
            <person name="Moore M.J.F."/>
            <person name="Nickerson T."/>
            <person name="Palmer S.A."/>
            <person name="Pearce A.V."/>
            <person name="Peck A.I."/>
            <person name="Pelan S."/>
            <person name="Phillimore B."/>
            <person name="Porter K.M."/>
            <person name="Rice C.M."/>
            <person name="Searle S."/>
            <person name="Sehra H.K."/>
            <person name="Shownkeen R."/>
            <person name="Skuce C.D."/>
            <person name="Smith M."/>
            <person name="Steward C.A."/>
            <person name="Sycamore N."/>
            <person name="Tester J."/>
            <person name="Thomas D.W."/>
            <person name="Tracey A."/>
            <person name="Tromans A."/>
            <person name="Tubby B."/>
            <person name="Wall M."/>
            <person name="Wallis J.M."/>
            <person name="West A.P."/>
            <person name="Whitehead S.L."/>
            <person name="Willey D.L."/>
            <person name="Wilming L."/>
            <person name="Wray P.W."/>
            <person name="Wright M.W."/>
            <person name="Young L."/>
            <person name="Coulson A."/>
            <person name="Durbin R.M."/>
            <person name="Hubbard T."/>
            <person name="Sulston J.E."/>
            <person name="Beck S."/>
            <person name="Bentley D.R."/>
            <person name="Rogers J."/>
            <person name="Ross M.T."/>
        </authorList>
    </citation>
    <scope>NUCLEOTIDE SEQUENCE [LARGE SCALE GENOMIC DNA]</scope>
</reference>
<reference key="6">
    <citation type="submission" date="2005-07" db="EMBL/GenBank/DDBJ databases">
        <authorList>
            <person name="Mural R.J."/>
            <person name="Istrail S."/>
            <person name="Sutton G.G."/>
            <person name="Florea L."/>
            <person name="Halpern A.L."/>
            <person name="Mobarry C.M."/>
            <person name="Lippert R."/>
            <person name="Walenz B."/>
            <person name="Shatkay H."/>
            <person name="Dew I."/>
            <person name="Miller J.R."/>
            <person name="Flanigan M.J."/>
            <person name="Edwards N.J."/>
            <person name="Bolanos R."/>
            <person name="Fasulo D."/>
            <person name="Halldorsson B.V."/>
            <person name="Hannenhalli S."/>
            <person name="Turner R."/>
            <person name="Yooseph S."/>
            <person name="Lu F."/>
            <person name="Nusskern D.R."/>
            <person name="Shue B.C."/>
            <person name="Zheng X.H."/>
            <person name="Zhong F."/>
            <person name="Delcher A.L."/>
            <person name="Huson D.H."/>
            <person name="Kravitz S.A."/>
            <person name="Mouchard L."/>
            <person name="Reinert K."/>
            <person name="Remington K.A."/>
            <person name="Clark A.G."/>
            <person name="Waterman M.S."/>
            <person name="Eichler E.E."/>
            <person name="Adams M.D."/>
            <person name="Hunkapiller M.W."/>
            <person name="Myers E.W."/>
            <person name="Venter J.C."/>
        </authorList>
    </citation>
    <scope>NUCLEOTIDE SEQUENCE [LARGE SCALE GENOMIC DNA]</scope>
</reference>
<reference key="7">
    <citation type="journal article" date="2004" name="Genome Res.">
        <title>The status, quality, and expansion of the NIH full-length cDNA project: the Mammalian Gene Collection (MGC).</title>
        <authorList>
            <consortium name="The MGC Project Team"/>
        </authorList>
    </citation>
    <scope>NUCLEOTIDE SEQUENCE [LARGE SCALE MRNA] (ISOFORM 2)</scope>
    <scope>NUCLEOTIDE SEQUENCE [LARGE SCALE MRNA] OF 7-319 (ISOFORM 1)</scope>
    <source>
        <tissue>Brain</tissue>
    </source>
</reference>
<reference key="8">
    <citation type="journal article" date="2005" name="J. Biochem.">
        <title>Structural and functional characterization of rabbit and human L-gulonate 3-dehydrogenase.</title>
        <authorList>
            <person name="Ishikura S."/>
            <person name="Usami N."/>
            <person name="Araki M."/>
            <person name="Hara A."/>
        </authorList>
    </citation>
    <scope>FUNCTION</scope>
    <scope>SUBUNIT</scope>
    <scope>CATALYTIC ACTIVITY</scope>
    <scope>ACTIVITY REGULATION</scope>
    <scope>BIOPHYSICOCHEMICAL PROPERTIES</scope>
    <source>
        <tissue>Liver</tissue>
    </source>
</reference>
<reference key="9">
    <citation type="journal article" date="2011" name="BMC Syst. Biol.">
        <title>Initial characterization of the human central proteome.</title>
        <authorList>
            <person name="Burkard T.R."/>
            <person name="Planyavsky M."/>
            <person name="Kaupe I."/>
            <person name="Breitwieser F.P."/>
            <person name="Buerckstuemmer T."/>
            <person name="Bennett K.L."/>
            <person name="Superti-Furga G."/>
            <person name="Colinge J."/>
        </authorList>
    </citation>
    <scope>IDENTIFICATION BY MASS SPECTROMETRY [LARGE SCALE ANALYSIS]</scope>
</reference>
<reference key="10">
    <citation type="journal article" date="2014" name="J. Proteomics">
        <title>An enzyme assisted RP-RPLC approach for in-depth analysis of human liver phosphoproteome.</title>
        <authorList>
            <person name="Bian Y."/>
            <person name="Song C."/>
            <person name="Cheng K."/>
            <person name="Dong M."/>
            <person name="Wang F."/>
            <person name="Huang J."/>
            <person name="Sun D."/>
            <person name="Wang L."/>
            <person name="Ye M."/>
            <person name="Zou H."/>
        </authorList>
    </citation>
    <scope>PHOSPHORYLATION [LARGE SCALE ANALYSIS] AT SER-111</scope>
    <scope>IDENTIFICATION BY MASS SPECTROMETRY [LARGE SCALE ANALYSIS]</scope>
    <source>
        <tissue>Liver</tissue>
    </source>
</reference>
<reference key="11">
    <citation type="submission" date="2009-02" db="PDB data bank">
        <title>The crystal structure of human lambda-crystallin, CRYL1.</title>
        <authorList>
            <consortium name="Structural genomics consortium (SGC)"/>
        </authorList>
    </citation>
    <scope>X-RAY CRYSTALLOGRAPHY (2.0 ANGSTROMS) OF 6-316 IN COMPLEX WITH NAD</scope>
</reference>
<protein>
    <recommendedName>
        <fullName>Lambda-crystallin homolog</fullName>
        <ecNumber evidence="4">1.1.1.45</ecNumber>
    </recommendedName>
    <alternativeName>
        <fullName>L-gulonate 3-dehydrogenase</fullName>
        <shortName>Gul3DH</shortName>
    </alternativeName>
</protein>
<sequence>MASSAAGCVVIVGSGVIGRSWAMLFASGGFQVKLYDIEQQQIRNALENIRKEMKLLEQAGSLKGSLSVEEQLSLISGCPNIQEAVEGAMHIQECVPEDLELKKKIFAQLDSIIDDRVILSSSTSCLMPSKLFAGLVHVKQCIVAHPVNPPYYIPLVELVPHPETAPTTVDRTHALMKKIGQCPMRVQKEVAGFVLNRLQYAIISEAWRLVEEGIVSPSDLDLVMSEGLGMRYAFIGPLETMHLNAEGMLSYCDRYSEGIKHVLQTFGPIPEFSRATAEKVNQDMCMKVPDDPEHLAARRQWRDECLMRLAKLKSQVQPQ</sequence>
<dbReference type="EC" id="1.1.1.45" evidence="4"/>
<dbReference type="EMBL" id="AF077049">
    <property type="protein sequence ID" value="AAD27782.1"/>
    <property type="status" value="ALT_SEQ"/>
    <property type="molecule type" value="mRNA"/>
</dbReference>
<dbReference type="EMBL" id="AF087898">
    <property type="protein sequence ID" value="AAP97197.1"/>
    <property type="molecule type" value="mRNA"/>
</dbReference>
<dbReference type="EMBL" id="AF160216">
    <property type="protein sequence ID" value="AAF67017.1"/>
    <property type="molecule type" value="mRNA"/>
</dbReference>
<dbReference type="EMBL" id="AK024041">
    <property type="protein sequence ID" value="BAG51254.1"/>
    <property type="molecule type" value="mRNA"/>
</dbReference>
<dbReference type="EMBL" id="AL161715">
    <property type="status" value="NOT_ANNOTATED_CDS"/>
    <property type="molecule type" value="Genomic_DNA"/>
</dbReference>
<dbReference type="EMBL" id="AL590096">
    <property type="status" value="NOT_ANNOTATED_CDS"/>
    <property type="molecule type" value="Genomic_DNA"/>
</dbReference>
<dbReference type="EMBL" id="CH471075">
    <property type="protein sequence ID" value="EAX08259.1"/>
    <property type="molecule type" value="Genomic_DNA"/>
</dbReference>
<dbReference type="EMBL" id="CH471075">
    <property type="protein sequence ID" value="EAX08260.1"/>
    <property type="molecule type" value="Genomic_DNA"/>
</dbReference>
<dbReference type="EMBL" id="BC008562">
    <property type="protein sequence ID" value="AAH08562.2"/>
    <property type="molecule type" value="mRNA"/>
</dbReference>
<dbReference type="EMBL" id="BC071810">
    <property type="protein sequence ID" value="AAH71810.1"/>
    <property type="molecule type" value="mRNA"/>
</dbReference>
<dbReference type="EMBL" id="BC119660">
    <property type="protein sequence ID" value="AAI19661.2"/>
    <property type="molecule type" value="mRNA"/>
</dbReference>
<dbReference type="EMBL" id="BC119661">
    <property type="protein sequence ID" value="AAI19662.2"/>
    <property type="molecule type" value="mRNA"/>
</dbReference>
<dbReference type="CCDS" id="CCDS41871.1">
    <molecule id="Q9Y2S2-1"/>
</dbReference>
<dbReference type="RefSeq" id="NP_057058.2">
    <molecule id="Q9Y2S2-1"/>
    <property type="nucleotide sequence ID" value="NM_015974.3"/>
</dbReference>
<dbReference type="PDB" id="3F3S">
    <property type="method" value="X-ray"/>
    <property type="resolution" value="2.00 A"/>
    <property type="chains" value="A/B=6-316"/>
</dbReference>
<dbReference type="PDBsum" id="3F3S"/>
<dbReference type="SMR" id="Q9Y2S2"/>
<dbReference type="BioGRID" id="119274">
    <property type="interactions" value="56"/>
</dbReference>
<dbReference type="FunCoup" id="Q9Y2S2">
    <property type="interactions" value="254"/>
</dbReference>
<dbReference type="IntAct" id="Q9Y2S2">
    <property type="interactions" value="39"/>
</dbReference>
<dbReference type="STRING" id="9606.ENSP00000298248"/>
<dbReference type="GlyGen" id="Q9Y2S2">
    <property type="glycosylation" value="1 site, 1 O-linked glycan (1 site)"/>
</dbReference>
<dbReference type="iPTMnet" id="Q9Y2S2"/>
<dbReference type="PhosphoSitePlus" id="Q9Y2S2"/>
<dbReference type="BioMuta" id="CRYL1"/>
<dbReference type="DMDM" id="93141249"/>
<dbReference type="OGP" id="Q9Y2S2"/>
<dbReference type="REPRODUCTION-2DPAGE" id="IPI00645031"/>
<dbReference type="jPOST" id="Q9Y2S2"/>
<dbReference type="MassIVE" id="Q9Y2S2"/>
<dbReference type="PaxDb" id="9606-ENSP00000298248"/>
<dbReference type="PeptideAtlas" id="Q9Y2S2"/>
<dbReference type="ProteomicsDB" id="85884">
    <molecule id="Q9Y2S2-1"/>
</dbReference>
<dbReference type="ProteomicsDB" id="85885">
    <molecule id="Q9Y2S2-2"/>
</dbReference>
<dbReference type="Pumba" id="Q9Y2S2"/>
<dbReference type="Antibodypedia" id="49573">
    <property type="antibodies" value="71 antibodies from 14 providers"/>
</dbReference>
<dbReference type="DNASU" id="51084"/>
<dbReference type="Ensembl" id="ENST00000298248.12">
    <molecule id="Q9Y2S2-1"/>
    <property type="protein sequence ID" value="ENSP00000298248.7"/>
    <property type="gene ID" value="ENSG00000165475.15"/>
</dbReference>
<dbReference type="Ensembl" id="ENST00000382812.5">
    <molecule id="Q9Y2S2-2"/>
    <property type="protein sequence ID" value="ENSP00000372262.1"/>
    <property type="gene ID" value="ENSG00000165475.15"/>
</dbReference>
<dbReference type="Ensembl" id="ENST00000643750.1">
    <molecule id="Q9Y2S2-2"/>
    <property type="protein sequence ID" value="ENSP00000493818.1"/>
    <property type="gene ID" value="ENSG00000165475.15"/>
</dbReference>
<dbReference type="GeneID" id="51084"/>
<dbReference type="KEGG" id="hsa:51084"/>
<dbReference type="MANE-Select" id="ENST00000298248.12">
    <property type="protein sequence ID" value="ENSP00000298248.7"/>
    <property type="RefSeq nucleotide sequence ID" value="NM_015974.3"/>
    <property type="RefSeq protein sequence ID" value="NP_057058.2"/>
</dbReference>
<dbReference type="UCSC" id="uc001ung.4">
    <molecule id="Q9Y2S2-1"/>
    <property type="organism name" value="human"/>
</dbReference>
<dbReference type="AGR" id="HGNC:18246"/>
<dbReference type="CTD" id="51084"/>
<dbReference type="DisGeNET" id="51084"/>
<dbReference type="GeneCards" id="CRYL1"/>
<dbReference type="HGNC" id="HGNC:18246">
    <property type="gene designation" value="CRYL1"/>
</dbReference>
<dbReference type="HPA" id="ENSG00000165475">
    <property type="expression patterns" value="Tissue enhanced (kidney, liver)"/>
</dbReference>
<dbReference type="MIM" id="609877">
    <property type="type" value="gene"/>
</dbReference>
<dbReference type="neXtProt" id="NX_Q9Y2S2"/>
<dbReference type="OpenTargets" id="ENSG00000165475"/>
<dbReference type="PharmGKB" id="PA26923"/>
<dbReference type="VEuPathDB" id="HostDB:ENSG00000165475"/>
<dbReference type="eggNOG" id="KOG2305">
    <property type="taxonomic scope" value="Eukaryota"/>
</dbReference>
<dbReference type="GeneTree" id="ENSGT00390000007182"/>
<dbReference type="HOGENOM" id="CLU_009834_0_0_1"/>
<dbReference type="InParanoid" id="Q9Y2S2"/>
<dbReference type="OMA" id="RDNCLTH"/>
<dbReference type="OrthoDB" id="2021159at2759"/>
<dbReference type="PAN-GO" id="Q9Y2S2">
    <property type="GO annotations" value="1 GO annotation based on evolutionary models"/>
</dbReference>
<dbReference type="PhylomeDB" id="Q9Y2S2"/>
<dbReference type="TreeFam" id="TF313501"/>
<dbReference type="PathwayCommons" id="Q9Y2S2"/>
<dbReference type="Reactome" id="R-HSA-5661270">
    <property type="pathway name" value="Formation of xylulose-5-phosphate"/>
</dbReference>
<dbReference type="SABIO-RK" id="Q9Y2S2"/>
<dbReference type="SignaLink" id="Q9Y2S2"/>
<dbReference type="BioGRID-ORCS" id="51084">
    <property type="hits" value="14 hits in 1157 CRISPR screens"/>
</dbReference>
<dbReference type="ChiTaRS" id="CRYL1">
    <property type="organism name" value="human"/>
</dbReference>
<dbReference type="EvolutionaryTrace" id="Q9Y2S2"/>
<dbReference type="GenomeRNAi" id="51084"/>
<dbReference type="Pharos" id="Q9Y2S2">
    <property type="development level" value="Tbio"/>
</dbReference>
<dbReference type="PRO" id="PR:Q9Y2S2"/>
<dbReference type="Proteomes" id="UP000005640">
    <property type="component" value="Chromosome 13"/>
</dbReference>
<dbReference type="RNAct" id="Q9Y2S2">
    <property type="molecule type" value="protein"/>
</dbReference>
<dbReference type="Bgee" id="ENSG00000165475">
    <property type="expression patterns" value="Expressed in adult mammalian kidney and 186 other cell types or tissues"/>
</dbReference>
<dbReference type="ExpressionAtlas" id="Q9Y2S2">
    <property type="expression patterns" value="baseline and differential"/>
</dbReference>
<dbReference type="GO" id="GO:0005829">
    <property type="term" value="C:cytosol"/>
    <property type="evidence" value="ECO:0000250"/>
    <property type="project" value="UniProtKB"/>
</dbReference>
<dbReference type="GO" id="GO:0070062">
    <property type="term" value="C:extracellular exosome"/>
    <property type="evidence" value="ECO:0007005"/>
    <property type="project" value="UniProtKB"/>
</dbReference>
<dbReference type="GO" id="GO:0050104">
    <property type="term" value="F:L-gulonate 3-dehydrogenase activity"/>
    <property type="evidence" value="ECO:0000314"/>
    <property type="project" value="UniProtKB"/>
</dbReference>
<dbReference type="GO" id="GO:0070403">
    <property type="term" value="F:NAD+ binding"/>
    <property type="evidence" value="ECO:0000314"/>
    <property type="project" value="UniProtKB"/>
</dbReference>
<dbReference type="GO" id="GO:0042803">
    <property type="term" value="F:protein homodimerization activity"/>
    <property type="evidence" value="ECO:0000353"/>
    <property type="project" value="UniProtKB"/>
</dbReference>
<dbReference type="GO" id="GO:0019640">
    <property type="term" value="P:D-glucuronate catabolic process to D-xylulose 5-phosphate"/>
    <property type="evidence" value="ECO:0007669"/>
    <property type="project" value="Ensembl"/>
</dbReference>
<dbReference type="GO" id="GO:0006631">
    <property type="term" value="P:fatty acid metabolic process"/>
    <property type="evidence" value="ECO:0007669"/>
    <property type="project" value="InterPro"/>
</dbReference>
<dbReference type="FunFam" id="3.40.50.720:FF:000356">
    <property type="entry name" value="Lambda-crystallin homolog"/>
    <property type="match status" value="1"/>
</dbReference>
<dbReference type="FunFam" id="1.10.1040.10:FF:000023">
    <property type="entry name" value="lambda-crystallin homolog"/>
    <property type="match status" value="1"/>
</dbReference>
<dbReference type="Gene3D" id="1.10.1040.10">
    <property type="entry name" value="N-(1-d-carboxylethyl)-l-norvaline Dehydrogenase, domain 2"/>
    <property type="match status" value="1"/>
</dbReference>
<dbReference type="Gene3D" id="3.40.50.720">
    <property type="entry name" value="NAD(P)-binding Rossmann-like Domain"/>
    <property type="match status" value="1"/>
</dbReference>
<dbReference type="InterPro" id="IPR022694">
    <property type="entry name" value="3-OHacyl-CoA_DH"/>
</dbReference>
<dbReference type="InterPro" id="IPR006180">
    <property type="entry name" value="3-OHacyl-CoA_DH_CS"/>
</dbReference>
<dbReference type="InterPro" id="IPR006176">
    <property type="entry name" value="3-OHacyl-CoA_DH_NAD-bd"/>
</dbReference>
<dbReference type="InterPro" id="IPR006108">
    <property type="entry name" value="3HC_DH_C"/>
</dbReference>
<dbReference type="InterPro" id="IPR008927">
    <property type="entry name" value="6-PGluconate_DH-like_C_sf"/>
</dbReference>
<dbReference type="InterPro" id="IPR013328">
    <property type="entry name" value="6PGD_dom2"/>
</dbReference>
<dbReference type="InterPro" id="IPR036291">
    <property type="entry name" value="NAD(P)-bd_dom_sf"/>
</dbReference>
<dbReference type="PANTHER" id="PTHR48075">
    <property type="entry name" value="3-HYDROXYACYL-COA DEHYDROGENASE FAMILY PROTEIN"/>
    <property type="match status" value="1"/>
</dbReference>
<dbReference type="PANTHER" id="PTHR48075:SF1">
    <property type="entry name" value="LAMBDA-CRYSTALLIN HOMOLOG"/>
    <property type="match status" value="1"/>
</dbReference>
<dbReference type="Pfam" id="PF00725">
    <property type="entry name" value="3HCDH"/>
    <property type="match status" value="1"/>
</dbReference>
<dbReference type="Pfam" id="PF02737">
    <property type="entry name" value="3HCDH_N"/>
    <property type="match status" value="1"/>
</dbReference>
<dbReference type="PIRSF" id="PIRSF000105">
    <property type="entry name" value="HCDH"/>
    <property type="match status" value="1"/>
</dbReference>
<dbReference type="SUPFAM" id="SSF48179">
    <property type="entry name" value="6-phosphogluconate dehydrogenase C-terminal domain-like"/>
    <property type="match status" value="1"/>
</dbReference>
<dbReference type="SUPFAM" id="SSF51735">
    <property type="entry name" value="NAD(P)-binding Rossmann-fold domains"/>
    <property type="match status" value="1"/>
</dbReference>
<dbReference type="PROSITE" id="PS00067">
    <property type="entry name" value="3HCDH"/>
    <property type="match status" value="1"/>
</dbReference>
<name>CRYL1_HUMAN</name>